<reference key="1">
    <citation type="journal article" date="1990" name="Immunogenetics">
        <title>Analysis of three distinct Ly6-A-related cDNA sequences isolated from rat kidney.</title>
        <authorList>
            <person name="Friedman S."/>
            <person name="Palfree R.G."/>
            <person name="Sirlin S."/>
            <person name="Hammerling U."/>
        </authorList>
    </citation>
    <scope>NUCLEOTIDE SEQUENCE [MRNA]</scope>
</reference>
<keyword id="KW-1003">Cell membrane</keyword>
<keyword id="KW-1015">Disulfide bond</keyword>
<keyword id="KW-0325">Glycoprotein</keyword>
<keyword id="KW-0336">GPI-anchor</keyword>
<keyword id="KW-0449">Lipoprotein</keyword>
<keyword id="KW-0472">Membrane</keyword>
<keyword id="KW-1185">Reference proteome</keyword>
<keyword id="KW-0732">Signal</keyword>
<feature type="signal peptide" evidence="2">
    <location>
        <begin position="1"/>
        <end position="26"/>
    </location>
</feature>
<feature type="chain" id="PRO_0000318209" description="Lymphocyte antigen 6B">
    <location>
        <begin position="27"/>
        <end position="113"/>
    </location>
</feature>
<feature type="propeptide" id="PRO_0000318210" description="Removed in mature form" evidence="2">
    <location>
        <begin position="114"/>
        <end position="135"/>
    </location>
</feature>
<feature type="domain" description="UPAR/Ly6">
    <location>
        <begin position="27"/>
        <end position="119"/>
    </location>
</feature>
<feature type="lipid moiety-binding region" description="GPI-anchor amidated glycine" evidence="2">
    <location>
        <position position="113"/>
    </location>
</feature>
<feature type="disulfide bond" evidence="1">
    <location>
        <begin position="29"/>
        <end position="54"/>
    </location>
</feature>
<feature type="disulfide bond" evidence="1">
    <location>
        <begin position="32"/>
        <end position="41"/>
    </location>
</feature>
<feature type="disulfide bond" evidence="1">
    <location>
        <begin position="47"/>
        <end position="75"/>
    </location>
</feature>
<feature type="disulfide bond" evidence="1">
    <location>
        <begin position="79"/>
        <end position="99"/>
    </location>
</feature>
<feature type="disulfide bond" evidence="1">
    <location>
        <begin position="100"/>
        <end position="105"/>
    </location>
</feature>
<organism>
    <name type="scientific">Rattus norvegicus</name>
    <name type="common">Rat</name>
    <dbReference type="NCBI Taxonomy" id="10116"/>
    <lineage>
        <taxon>Eukaryota</taxon>
        <taxon>Metazoa</taxon>
        <taxon>Chordata</taxon>
        <taxon>Craniata</taxon>
        <taxon>Vertebrata</taxon>
        <taxon>Euteleostomi</taxon>
        <taxon>Mammalia</taxon>
        <taxon>Eutheria</taxon>
        <taxon>Euarchontoglires</taxon>
        <taxon>Glires</taxon>
        <taxon>Rodentia</taxon>
        <taxon>Myomorpha</taxon>
        <taxon>Muroidea</taxon>
        <taxon>Muridae</taxon>
        <taxon>Murinae</taxon>
        <taxon>Rattus</taxon>
    </lineage>
</organism>
<gene>
    <name type="primary">Ly6b</name>
</gene>
<name>LY6B_RAT</name>
<dbReference type="EMBL" id="M30689">
    <property type="protein sequence ID" value="AAA41546.1"/>
    <property type="molecule type" value="mRNA"/>
</dbReference>
<dbReference type="PIR" id="A45835">
    <property type="entry name" value="A45835"/>
</dbReference>
<dbReference type="RefSeq" id="NP_640350.1">
    <property type="nucleotide sequence ID" value="NM_139257.1"/>
</dbReference>
<dbReference type="RefSeq" id="XP_006241827.1">
    <property type="nucleotide sequence ID" value="XM_006241765.3"/>
</dbReference>
<dbReference type="RefSeq" id="XP_006241828.1">
    <property type="nucleotide sequence ID" value="XM_006241766.3"/>
</dbReference>
<dbReference type="RefSeq" id="XP_008763767.1">
    <property type="nucleotide sequence ID" value="XM_008765545.2"/>
</dbReference>
<dbReference type="SMR" id="Q63317"/>
<dbReference type="STRING" id="10116.ENSRNOP00000068186"/>
<dbReference type="GlyGen" id="Q63317">
    <property type="glycosylation" value="1 site"/>
</dbReference>
<dbReference type="iPTMnet" id="Q63317"/>
<dbReference type="PhosphoSitePlus" id="Q63317"/>
<dbReference type="PaxDb" id="10116-ENSRNOP00000068186"/>
<dbReference type="Ensembl" id="ENSRNOT00000009395.4">
    <property type="protein sequence ID" value="ENSRNOP00000009395.3"/>
    <property type="gene ID" value="ENSRNOG00000007137.6"/>
</dbReference>
<dbReference type="GeneID" id="246138"/>
<dbReference type="KEGG" id="rno:246138"/>
<dbReference type="UCSC" id="RGD:628818">
    <property type="organism name" value="rat"/>
</dbReference>
<dbReference type="AGR" id="RGD:628818"/>
<dbReference type="CTD" id="57248"/>
<dbReference type="RGD" id="628818">
    <property type="gene designation" value="Ly6b"/>
</dbReference>
<dbReference type="eggNOG" id="ENOG502TD4F">
    <property type="taxonomic scope" value="Eukaryota"/>
</dbReference>
<dbReference type="GeneTree" id="ENSGT00940000154560"/>
<dbReference type="HOGENOM" id="CLU_106772_0_0_1"/>
<dbReference type="InParanoid" id="Q63317"/>
<dbReference type="OMA" id="HVNTDCC"/>
<dbReference type="OrthoDB" id="5945173at2759"/>
<dbReference type="PhylomeDB" id="Q63317"/>
<dbReference type="TreeFam" id="TF337757"/>
<dbReference type="PRO" id="PR:Q63317"/>
<dbReference type="Proteomes" id="UP000002494">
    <property type="component" value="Chromosome 7"/>
</dbReference>
<dbReference type="Bgee" id="ENSRNOG00000007137">
    <property type="expression patterns" value="Expressed in lung and 12 other cell types or tissues"/>
</dbReference>
<dbReference type="GO" id="GO:0005886">
    <property type="term" value="C:plasma membrane"/>
    <property type="evidence" value="ECO:0000318"/>
    <property type="project" value="GO_Central"/>
</dbReference>
<dbReference type="GO" id="GO:0098552">
    <property type="term" value="C:side of membrane"/>
    <property type="evidence" value="ECO:0007669"/>
    <property type="project" value="UniProtKB-KW"/>
</dbReference>
<dbReference type="GO" id="GO:0045202">
    <property type="term" value="C:synapse"/>
    <property type="evidence" value="ECO:0007669"/>
    <property type="project" value="GOC"/>
</dbReference>
<dbReference type="GO" id="GO:0033130">
    <property type="term" value="F:acetylcholine receptor binding"/>
    <property type="evidence" value="ECO:0000318"/>
    <property type="project" value="GO_Central"/>
</dbReference>
<dbReference type="GO" id="GO:0030550">
    <property type="term" value="F:acetylcholine receptor inhibitor activity"/>
    <property type="evidence" value="ECO:0000318"/>
    <property type="project" value="GO_Central"/>
</dbReference>
<dbReference type="GO" id="GO:0095500">
    <property type="term" value="P:acetylcholine receptor signaling pathway"/>
    <property type="evidence" value="ECO:0000318"/>
    <property type="project" value="GO_Central"/>
</dbReference>
<dbReference type="CDD" id="cd23541">
    <property type="entry name" value="TFP_LU_ECD_Ly6A_like"/>
    <property type="match status" value="1"/>
</dbReference>
<dbReference type="FunFam" id="2.10.60.10:FF:000003">
    <property type="entry name" value="lymphocyte antigen 6E isoform X1"/>
    <property type="match status" value="1"/>
</dbReference>
<dbReference type="Gene3D" id="2.10.60.10">
    <property type="entry name" value="CD59"/>
    <property type="match status" value="1"/>
</dbReference>
<dbReference type="InterPro" id="IPR016054">
    <property type="entry name" value="LY6_UPA_recep-like"/>
</dbReference>
<dbReference type="InterPro" id="IPR051445">
    <property type="entry name" value="LY6H/LY6L_nAChR_modulators"/>
</dbReference>
<dbReference type="InterPro" id="IPR045860">
    <property type="entry name" value="Snake_toxin-like_sf"/>
</dbReference>
<dbReference type="PANTHER" id="PTHR32217">
    <property type="entry name" value="LYMPHOCYTE ANTIGEN 6H"/>
    <property type="match status" value="1"/>
</dbReference>
<dbReference type="PANTHER" id="PTHR32217:SF3">
    <property type="entry name" value="LYMPHOCYTE ANTIGEN 6S"/>
    <property type="match status" value="1"/>
</dbReference>
<dbReference type="Pfam" id="PF00021">
    <property type="entry name" value="UPAR_LY6"/>
    <property type="match status" value="1"/>
</dbReference>
<dbReference type="SMART" id="SM00134">
    <property type="entry name" value="LU"/>
    <property type="match status" value="1"/>
</dbReference>
<dbReference type="SUPFAM" id="SSF57302">
    <property type="entry name" value="Snake toxin-like"/>
    <property type="match status" value="1"/>
</dbReference>
<protein>
    <recommendedName>
        <fullName>Lymphocyte antigen 6B</fullName>
        <shortName>Ly-6B</shortName>
    </recommendedName>
</protein>
<comment type="subcellular location">
    <subcellularLocation>
        <location evidence="3">Cell membrane</location>
        <topology evidence="3">Lipid-anchor</topology>
        <topology evidence="3">GPI-anchor</topology>
    </subcellularLocation>
</comment>
<evidence type="ECO:0000250" key="1"/>
<evidence type="ECO:0000255" key="2"/>
<evidence type="ECO:0000305" key="3"/>
<accession>Q63317</accession>
<sequence>MNRSCAMKSCVLILLLALLCAERAQGLNCYNCTMIPFGNTCSSTATCPYPDGVCTIQVAEVVVSSVRLKVKSNLCLPGCPKSPQTPEVLGTVVHVNTDCCNTDLCNAAGPTGGSTWTMAGVLLFILGSVLLQTLL</sequence>
<proteinExistence type="evidence at transcript level"/>